<proteinExistence type="inferred from homology"/>
<organism>
    <name type="scientific">Drosophila erecta</name>
    <name type="common">Fruit fly</name>
    <dbReference type="NCBI Taxonomy" id="7220"/>
    <lineage>
        <taxon>Eukaryota</taxon>
        <taxon>Metazoa</taxon>
        <taxon>Ecdysozoa</taxon>
        <taxon>Arthropoda</taxon>
        <taxon>Hexapoda</taxon>
        <taxon>Insecta</taxon>
        <taxon>Pterygota</taxon>
        <taxon>Neoptera</taxon>
        <taxon>Endopterygota</taxon>
        <taxon>Diptera</taxon>
        <taxon>Brachycera</taxon>
        <taxon>Muscomorpha</taxon>
        <taxon>Ephydroidea</taxon>
        <taxon>Drosophilidae</taxon>
        <taxon>Drosophila</taxon>
        <taxon>Sophophora</taxon>
    </lineage>
</organism>
<comment type="function">
    <text evidence="2">Specifically required in males for proper segregation of autosomal bivalents at meiosis I. Expression is required in the male germ line prior to spermatocyte stage S4. May have a role as a bridging molecule maintaining adhesion to hold autosome bivalents together via heterochromatic connections (By similarity).</text>
</comment>
<comment type="subcellular location">
    <subcellularLocation>
        <location evidence="2">Nucleus</location>
    </subcellularLocation>
    <subcellularLocation>
        <location evidence="1">Chromosome</location>
    </subcellularLocation>
    <text evidence="2">Male meiotic chromosomes.</text>
</comment>
<comment type="miscellaneous">
    <text evidence="2">Drosophilid specific gene duplication generates rgr and tef. Teflon has a function unique to Drosophilids.</text>
</comment>
<comment type="similarity">
    <text evidence="5">Belongs to the Teflon family.</text>
</comment>
<gene>
    <name evidence="2" type="primary">tef</name>
    <name type="ORF">GG22222</name>
</gene>
<sequence length="658" mass="74390">MSAFLDKLSGSQCVSLEKCGDVVVSTNDCMIALYCHFCRDLFTQLPEFLRHLQGAHSDVLHFTKEHNVYSVEELMSGEQDDAQEDAHSAGHNSSSGDSRIPAKSEDSRAIDASEDNSDNSPVKSEQKGMQNEINLLAEVTNILLQSKEREHINNESKPENGGFNGPCKKASSESNSLRICDLKSHTIARTSRKRMSMLKNRILRVIDSDVSAKREMKPSEPNYILPITETIQEDNIPKICFETQPKPIPSSSNLSVRKSSLSEPNVSLACTNYAAKKTTLTIPKLLNCTPKSNLPCQQSQVYSDSNGRSETYHISKATSQGSKEMESFPVKITQIDVLPPLILPETSTTPNQKERVNALVENNTVNLYTAQNLPKEKPKKFFKKRGELWMKSEDSPSKSVKITKYRGNPIIVKRVQTSSAKSSPCKTQIRSNDKTKCFASEFNSTKIRKLKMENSIALKKEDPCSNKSIRLSKMATISSCEILKVVGLPAITDQKLEDTLLLDELETMRKKADQFSKIYKKYDSIWNYRKIFPPGKPEFISQKMFALTREVNETMGCNLANSAIKSIINQISVWHYNIYTKCIVLDTISETARHTLKLFSFLPVSFAYFCKCCDDIFTLNEDYTRHLVSQQARYQCTKCIKAFKYRGHFEKHLQNVHP</sequence>
<accession>B3NP26</accession>
<feature type="chain" id="PRO_0000377407" description="Protein teflon">
    <location>
        <begin position="1"/>
        <end position="658"/>
    </location>
</feature>
<feature type="zinc finger region" description="C2H2-type 1" evidence="3">
    <location>
        <begin position="33"/>
        <end position="56"/>
    </location>
</feature>
<feature type="zinc finger region" description="C2H2-type 2; degenerate" evidence="3">
    <location>
        <begin position="608"/>
        <end position="630"/>
    </location>
</feature>
<feature type="zinc finger region" description="C2H2-type 3" evidence="3">
    <location>
        <begin position="634"/>
        <end position="657"/>
    </location>
</feature>
<feature type="region of interest" description="Disordered" evidence="4">
    <location>
        <begin position="78"/>
        <end position="127"/>
    </location>
</feature>
<feature type="region of interest" description="Disordered" evidence="4">
    <location>
        <begin position="151"/>
        <end position="175"/>
    </location>
</feature>
<feature type="compositionally biased region" description="Basic and acidic residues" evidence="4">
    <location>
        <begin position="100"/>
        <end position="111"/>
    </location>
</feature>
<feature type="compositionally biased region" description="Polar residues" evidence="4">
    <location>
        <begin position="118"/>
        <end position="127"/>
    </location>
</feature>
<keyword id="KW-0131">Cell cycle</keyword>
<keyword id="KW-0158">Chromosome</keyword>
<keyword id="KW-0159">Chromosome partition</keyword>
<keyword id="KW-0469">Meiosis</keyword>
<keyword id="KW-0479">Metal-binding</keyword>
<keyword id="KW-0539">Nucleus</keyword>
<keyword id="KW-0677">Repeat</keyword>
<keyword id="KW-0862">Zinc</keyword>
<keyword id="KW-0863">Zinc-finger</keyword>
<evidence type="ECO:0000250" key="1"/>
<evidence type="ECO:0000250" key="2">
    <source>
        <dbReference type="UniProtKB" id="Q7K4M4"/>
    </source>
</evidence>
<evidence type="ECO:0000255" key="3">
    <source>
        <dbReference type="PROSITE-ProRule" id="PRU00042"/>
    </source>
</evidence>
<evidence type="ECO:0000256" key="4">
    <source>
        <dbReference type="SAM" id="MobiDB-lite"/>
    </source>
</evidence>
<evidence type="ECO:0000305" key="5"/>
<evidence type="ECO:0000312" key="6">
    <source>
        <dbReference type="EMBL" id="EDV55665.1"/>
    </source>
</evidence>
<name>TEF_DROER</name>
<reference evidence="6" key="1">
    <citation type="journal article" date="2007" name="Nature">
        <title>Evolution of genes and genomes on the Drosophila phylogeny.</title>
        <authorList>
            <consortium name="Drosophila 12 genomes consortium"/>
        </authorList>
    </citation>
    <scope>NUCLEOTIDE SEQUENCE [LARGE SCALE GENOMIC DNA]</scope>
    <source>
        <strain evidence="6">Tucson 14021-0224.01</strain>
    </source>
</reference>
<dbReference type="EMBL" id="CH954179">
    <property type="protein sequence ID" value="EDV55665.1"/>
    <property type="molecule type" value="Genomic_DNA"/>
</dbReference>
<dbReference type="EnsemblMetazoa" id="FBtr0142276">
    <property type="protein sequence ID" value="FBpp0140768"/>
    <property type="gene ID" value="FBgn0114395"/>
</dbReference>
<dbReference type="EnsemblMetazoa" id="XM_001975229.3">
    <property type="protein sequence ID" value="XP_001975265.1"/>
    <property type="gene ID" value="LOC6548233"/>
</dbReference>
<dbReference type="GeneID" id="6548233"/>
<dbReference type="KEGG" id="der:6548233"/>
<dbReference type="eggNOG" id="ENOG502T9CV">
    <property type="taxonomic scope" value="Eukaryota"/>
</dbReference>
<dbReference type="HOGENOM" id="CLU_014432_0_0_1"/>
<dbReference type="OMA" id="TKEHNVY"/>
<dbReference type="OrthoDB" id="8067562at2759"/>
<dbReference type="PhylomeDB" id="B3NP26"/>
<dbReference type="Proteomes" id="UP000008711">
    <property type="component" value="Unassembled WGS sequence"/>
</dbReference>
<dbReference type="GO" id="GO:0030849">
    <property type="term" value="C:autosome"/>
    <property type="evidence" value="ECO:0000250"/>
    <property type="project" value="UniProtKB"/>
</dbReference>
<dbReference type="GO" id="GO:0005634">
    <property type="term" value="C:nucleus"/>
    <property type="evidence" value="ECO:0007669"/>
    <property type="project" value="UniProtKB-SubCell"/>
</dbReference>
<dbReference type="GO" id="GO:0008270">
    <property type="term" value="F:zinc ion binding"/>
    <property type="evidence" value="ECO:0007669"/>
    <property type="project" value="UniProtKB-KW"/>
</dbReference>
<dbReference type="GO" id="GO:0051308">
    <property type="term" value="P:male meiosis chromosome separation"/>
    <property type="evidence" value="ECO:0000250"/>
    <property type="project" value="UniProtKB"/>
</dbReference>
<dbReference type="GO" id="GO:0007141">
    <property type="term" value="P:male meiosis I"/>
    <property type="evidence" value="ECO:0007669"/>
    <property type="project" value="EnsemblMetazoa"/>
</dbReference>
<dbReference type="Gene3D" id="3.30.160.60">
    <property type="entry name" value="Classic Zinc Finger"/>
    <property type="match status" value="1"/>
</dbReference>
<dbReference type="InterPro" id="IPR013087">
    <property type="entry name" value="Znf_C2H2_type"/>
</dbReference>
<dbReference type="SMART" id="SM00355">
    <property type="entry name" value="ZnF_C2H2"/>
    <property type="match status" value="3"/>
</dbReference>
<dbReference type="PROSITE" id="PS00028">
    <property type="entry name" value="ZINC_FINGER_C2H2_1"/>
    <property type="match status" value="2"/>
</dbReference>
<dbReference type="PROSITE" id="PS50157">
    <property type="entry name" value="ZINC_FINGER_C2H2_2"/>
    <property type="match status" value="1"/>
</dbReference>
<protein>
    <recommendedName>
        <fullName evidence="2">Protein teflon</fullName>
    </recommendedName>
</protein>